<organism>
    <name type="scientific">Gloeobacter violaceus (strain ATCC 29082 / PCC 7421)</name>
    <dbReference type="NCBI Taxonomy" id="251221"/>
    <lineage>
        <taxon>Bacteria</taxon>
        <taxon>Bacillati</taxon>
        <taxon>Cyanobacteriota</taxon>
        <taxon>Cyanophyceae</taxon>
        <taxon>Gloeobacterales</taxon>
        <taxon>Gloeobacteraceae</taxon>
        <taxon>Gloeobacter</taxon>
    </lineage>
</organism>
<protein>
    <recommendedName>
        <fullName evidence="1">Biotin synthase</fullName>
        <ecNumber evidence="1">2.8.1.6</ecNumber>
    </recommendedName>
</protein>
<evidence type="ECO:0000255" key="1">
    <source>
        <dbReference type="HAMAP-Rule" id="MF_01694"/>
    </source>
</evidence>
<evidence type="ECO:0000255" key="2">
    <source>
        <dbReference type="PROSITE-ProRule" id="PRU01266"/>
    </source>
</evidence>
<accession>Q7NDA8</accession>
<dbReference type="EC" id="2.8.1.6" evidence="1"/>
<dbReference type="EMBL" id="BA000045">
    <property type="protein sequence ID" value="BAC92269.1"/>
    <property type="molecule type" value="Genomic_DNA"/>
</dbReference>
<dbReference type="RefSeq" id="NP_927274.1">
    <property type="nucleotide sequence ID" value="NC_005125.1"/>
</dbReference>
<dbReference type="RefSeq" id="WP_011144311.1">
    <property type="nucleotide sequence ID" value="NC_005125.1"/>
</dbReference>
<dbReference type="SMR" id="Q7NDA8"/>
<dbReference type="FunCoup" id="Q7NDA8">
    <property type="interactions" value="219"/>
</dbReference>
<dbReference type="STRING" id="251221.gene:10761847"/>
<dbReference type="EnsemblBacteria" id="BAC92269">
    <property type="protein sequence ID" value="BAC92269"/>
    <property type="gene ID" value="BAC92269"/>
</dbReference>
<dbReference type="KEGG" id="gvi:glr4328"/>
<dbReference type="PATRIC" id="fig|251221.4.peg.4358"/>
<dbReference type="eggNOG" id="COG0502">
    <property type="taxonomic scope" value="Bacteria"/>
</dbReference>
<dbReference type="HOGENOM" id="CLU_033172_1_2_3"/>
<dbReference type="InParanoid" id="Q7NDA8"/>
<dbReference type="OrthoDB" id="9786826at2"/>
<dbReference type="PhylomeDB" id="Q7NDA8"/>
<dbReference type="UniPathway" id="UPA00078">
    <property type="reaction ID" value="UER00162"/>
</dbReference>
<dbReference type="Proteomes" id="UP000000557">
    <property type="component" value="Chromosome"/>
</dbReference>
<dbReference type="GO" id="GO:0051537">
    <property type="term" value="F:2 iron, 2 sulfur cluster binding"/>
    <property type="evidence" value="ECO:0000318"/>
    <property type="project" value="GO_Central"/>
</dbReference>
<dbReference type="GO" id="GO:0051539">
    <property type="term" value="F:4 iron, 4 sulfur cluster binding"/>
    <property type="evidence" value="ECO:0007669"/>
    <property type="project" value="UniProtKB-KW"/>
</dbReference>
<dbReference type="GO" id="GO:0004076">
    <property type="term" value="F:biotin synthase activity"/>
    <property type="evidence" value="ECO:0000318"/>
    <property type="project" value="GO_Central"/>
</dbReference>
<dbReference type="GO" id="GO:0005506">
    <property type="term" value="F:iron ion binding"/>
    <property type="evidence" value="ECO:0007669"/>
    <property type="project" value="UniProtKB-UniRule"/>
</dbReference>
<dbReference type="GO" id="GO:0009102">
    <property type="term" value="P:biotin biosynthetic process"/>
    <property type="evidence" value="ECO:0000318"/>
    <property type="project" value="GO_Central"/>
</dbReference>
<dbReference type="CDD" id="cd01335">
    <property type="entry name" value="Radical_SAM"/>
    <property type="match status" value="1"/>
</dbReference>
<dbReference type="Gene3D" id="3.20.20.70">
    <property type="entry name" value="Aldolase class I"/>
    <property type="match status" value="1"/>
</dbReference>
<dbReference type="HAMAP" id="MF_01694">
    <property type="entry name" value="BioB"/>
    <property type="match status" value="1"/>
</dbReference>
<dbReference type="InterPro" id="IPR013785">
    <property type="entry name" value="Aldolase_TIM"/>
</dbReference>
<dbReference type="InterPro" id="IPR010722">
    <property type="entry name" value="BATS_dom"/>
</dbReference>
<dbReference type="InterPro" id="IPR002684">
    <property type="entry name" value="Biotin_synth/BioAB"/>
</dbReference>
<dbReference type="InterPro" id="IPR024177">
    <property type="entry name" value="Biotin_synthase"/>
</dbReference>
<dbReference type="InterPro" id="IPR006638">
    <property type="entry name" value="Elp3/MiaA/NifB-like_rSAM"/>
</dbReference>
<dbReference type="InterPro" id="IPR007197">
    <property type="entry name" value="rSAM"/>
</dbReference>
<dbReference type="NCBIfam" id="TIGR00433">
    <property type="entry name" value="bioB"/>
    <property type="match status" value="1"/>
</dbReference>
<dbReference type="PANTHER" id="PTHR22976">
    <property type="entry name" value="BIOTIN SYNTHASE"/>
    <property type="match status" value="1"/>
</dbReference>
<dbReference type="PANTHER" id="PTHR22976:SF2">
    <property type="entry name" value="BIOTIN SYNTHASE, MITOCHONDRIAL"/>
    <property type="match status" value="1"/>
</dbReference>
<dbReference type="Pfam" id="PF06968">
    <property type="entry name" value="BATS"/>
    <property type="match status" value="1"/>
</dbReference>
<dbReference type="Pfam" id="PF04055">
    <property type="entry name" value="Radical_SAM"/>
    <property type="match status" value="1"/>
</dbReference>
<dbReference type="PIRSF" id="PIRSF001619">
    <property type="entry name" value="Biotin_synth"/>
    <property type="match status" value="1"/>
</dbReference>
<dbReference type="SFLD" id="SFLDF00272">
    <property type="entry name" value="biotin_synthase"/>
    <property type="match status" value="1"/>
</dbReference>
<dbReference type="SFLD" id="SFLDG01278">
    <property type="entry name" value="biotin_synthase_like"/>
    <property type="match status" value="1"/>
</dbReference>
<dbReference type="SMART" id="SM00876">
    <property type="entry name" value="BATS"/>
    <property type="match status" value="1"/>
</dbReference>
<dbReference type="SMART" id="SM00729">
    <property type="entry name" value="Elp3"/>
    <property type="match status" value="1"/>
</dbReference>
<dbReference type="SUPFAM" id="SSF102114">
    <property type="entry name" value="Radical SAM enzymes"/>
    <property type="match status" value="1"/>
</dbReference>
<dbReference type="PROSITE" id="PS51918">
    <property type="entry name" value="RADICAL_SAM"/>
    <property type="match status" value="1"/>
</dbReference>
<feature type="chain" id="PRO_0000381408" description="Biotin synthase">
    <location>
        <begin position="1"/>
        <end position="318"/>
    </location>
</feature>
<feature type="domain" description="Radical SAM core" evidence="2">
    <location>
        <begin position="36"/>
        <end position="258"/>
    </location>
</feature>
<feature type="binding site" evidence="1">
    <location>
        <position position="54"/>
    </location>
    <ligand>
        <name>[4Fe-4S] cluster</name>
        <dbReference type="ChEBI" id="CHEBI:49883"/>
        <note>4Fe-4S-S-AdoMet</note>
    </ligand>
</feature>
<feature type="binding site" evidence="1">
    <location>
        <position position="58"/>
    </location>
    <ligand>
        <name>[4Fe-4S] cluster</name>
        <dbReference type="ChEBI" id="CHEBI:49883"/>
        <note>4Fe-4S-S-AdoMet</note>
    </ligand>
</feature>
<feature type="binding site" evidence="1">
    <location>
        <position position="61"/>
    </location>
    <ligand>
        <name>[4Fe-4S] cluster</name>
        <dbReference type="ChEBI" id="CHEBI:49883"/>
        <note>4Fe-4S-S-AdoMet</note>
    </ligand>
</feature>
<feature type="binding site" evidence="1">
    <location>
        <position position="98"/>
    </location>
    <ligand>
        <name>[2Fe-2S] cluster</name>
        <dbReference type="ChEBI" id="CHEBI:190135"/>
    </ligand>
</feature>
<feature type="binding site" evidence="1">
    <location>
        <position position="130"/>
    </location>
    <ligand>
        <name>[2Fe-2S] cluster</name>
        <dbReference type="ChEBI" id="CHEBI:190135"/>
    </ligand>
</feature>
<feature type="binding site" evidence="1">
    <location>
        <position position="190"/>
    </location>
    <ligand>
        <name>[2Fe-2S] cluster</name>
        <dbReference type="ChEBI" id="CHEBI:190135"/>
    </ligand>
</feature>
<feature type="binding site" evidence="1">
    <location>
        <position position="262"/>
    </location>
    <ligand>
        <name>[2Fe-2S] cluster</name>
        <dbReference type="ChEBI" id="CHEBI:190135"/>
    </ligand>
</feature>
<comment type="function">
    <text evidence="1">Catalyzes the conversion of dethiobiotin (DTB) to biotin by the insertion of a sulfur atom into dethiobiotin via a radical-based mechanism.</text>
</comment>
<comment type="catalytic activity">
    <reaction evidence="1">
        <text>(4R,5S)-dethiobiotin + (sulfur carrier)-SH + 2 reduced [2Fe-2S]-[ferredoxin] + 2 S-adenosyl-L-methionine = (sulfur carrier)-H + biotin + 2 5'-deoxyadenosine + 2 L-methionine + 2 oxidized [2Fe-2S]-[ferredoxin]</text>
        <dbReference type="Rhea" id="RHEA:22060"/>
        <dbReference type="Rhea" id="RHEA-COMP:10000"/>
        <dbReference type="Rhea" id="RHEA-COMP:10001"/>
        <dbReference type="Rhea" id="RHEA-COMP:14737"/>
        <dbReference type="Rhea" id="RHEA-COMP:14739"/>
        <dbReference type="ChEBI" id="CHEBI:17319"/>
        <dbReference type="ChEBI" id="CHEBI:29917"/>
        <dbReference type="ChEBI" id="CHEBI:33737"/>
        <dbReference type="ChEBI" id="CHEBI:33738"/>
        <dbReference type="ChEBI" id="CHEBI:57586"/>
        <dbReference type="ChEBI" id="CHEBI:57844"/>
        <dbReference type="ChEBI" id="CHEBI:59789"/>
        <dbReference type="ChEBI" id="CHEBI:64428"/>
        <dbReference type="ChEBI" id="CHEBI:149473"/>
        <dbReference type="EC" id="2.8.1.6"/>
    </reaction>
</comment>
<comment type="cofactor">
    <cofactor evidence="1">
        <name>[4Fe-4S] cluster</name>
        <dbReference type="ChEBI" id="CHEBI:49883"/>
    </cofactor>
    <text evidence="1">Binds 1 [4Fe-4S] cluster. The cluster is coordinated with 3 cysteines and an exchangeable S-adenosyl-L-methionine.</text>
</comment>
<comment type="cofactor">
    <cofactor evidence="1">
        <name>[2Fe-2S] cluster</name>
        <dbReference type="ChEBI" id="CHEBI:190135"/>
    </cofactor>
    <text evidence="1">Binds 1 [2Fe-2S] cluster. The cluster is coordinated with 3 cysteines and 1 arginine.</text>
</comment>
<comment type="pathway">
    <text evidence="1">Cofactor biosynthesis; biotin biosynthesis; biotin from 7,8-diaminononanoate: step 2/2.</text>
</comment>
<comment type="subunit">
    <text evidence="1">Homodimer.</text>
</comment>
<comment type="similarity">
    <text evidence="1">Belongs to the radical SAM superfamily. Biotin synthase family.</text>
</comment>
<proteinExistence type="inferred from homology"/>
<gene>
    <name evidence="1" type="primary">bioB</name>
    <name type="ordered locus">glr4328</name>
</gene>
<reference key="1">
    <citation type="journal article" date="2003" name="DNA Res.">
        <title>Complete genome structure of Gloeobacter violaceus PCC 7421, a cyanobacterium that lacks thylakoids.</title>
        <authorList>
            <person name="Nakamura Y."/>
            <person name="Kaneko T."/>
            <person name="Sato S."/>
            <person name="Mimuro M."/>
            <person name="Miyashita H."/>
            <person name="Tsuchiya T."/>
            <person name="Sasamoto S."/>
            <person name="Watanabe A."/>
            <person name="Kawashima K."/>
            <person name="Kishida Y."/>
            <person name="Kiyokawa C."/>
            <person name="Kohara M."/>
            <person name="Matsumoto M."/>
            <person name="Matsuno A."/>
            <person name="Nakazaki N."/>
            <person name="Shimpo S."/>
            <person name="Takeuchi C."/>
            <person name="Yamada M."/>
            <person name="Tabata S."/>
        </authorList>
    </citation>
    <scope>NUCLEOTIDE SEQUENCE [LARGE SCALE GENOMIC DNA]</scope>
    <source>
        <strain>ATCC 29082 / PCC 7421</strain>
    </source>
</reference>
<keyword id="KW-0001">2Fe-2S</keyword>
<keyword id="KW-0004">4Fe-4S</keyword>
<keyword id="KW-0093">Biotin biosynthesis</keyword>
<keyword id="KW-0408">Iron</keyword>
<keyword id="KW-0411">Iron-sulfur</keyword>
<keyword id="KW-0479">Metal-binding</keyword>
<keyword id="KW-1185">Reference proteome</keyword>
<keyword id="KW-0949">S-adenosyl-L-methionine</keyword>
<keyword id="KW-0808">Transferase</keyword>
<name>BIOB_GLOVI</name>
<sequence length="318" mass="34494">MCRAPMPSTVSEISRIYHQPLPDLLFEAQRVHRAHHDPREVQLCTLSNIKTGLCPENCGYCSQSVHHKSGLAAQELSSLDAVMAEAQAAKAAGSTRFCMGAAWREIKDGPPFERVLEMVRSVAALDMEVCCTLGMVKPHQAERLKQAGLTAYNHNLDTGPGYYPQVVTTRTYKDRLETIRAVGAAGISVCCGGILGMGESLTDRFELLESLGSLDPTPESIPINCLVPVAGTPLADSSPVEPLDLVRMVATTRILFPDAMVRLSAGRLQMSEELQALCFLAGANSIFTGPKLLTTPNPEHSHDQKLLEKLGMEPKTTQ</sequence>